<feature type="chain" id="PRO_1000011300" description="Probable endonuclease 4">
    <location>
        <begin position="1"/>
        <end position="285"/>
    </location>
</feature>
<feature type="binding site" evidence="1">
    <location>
        <position position="69"/>
    </location>
    <ligand>
        <name>Zn(2+)</name>
        <dbReference type="ChEBI" id="CHEBI:29105"/>
        <label>1</label>
    </ligand>
</feature>
<feature type="binding site" evidence="1">
    <location>
        <position position="109"/>
    </location>
    <ligand>
        <name>Zn(2+)</name>
        <dbReference type="ChEBI" id="CHEBI:29105"/>
        <label>1</label>
    </ligand>
</feature>
<feature type="binding site" evidence="1">
    <location>
        <position position="145"/>
    </location>
    <ligand>
        <name>Zn(2+)</name>
        <dbReference type="ChEBI" id="CHEBI:29105"/>
        <label>1</label>
    </ligand>
</feature>
<feature type="binding site" evidence="1">
    <location>
        <position position="145"/>
    </location>
    <ligand>
        <name>Zn(2+)</name>
        <dbReference type="ChEBI" id="CHEBI:29105"/>
        <label>2</label>
    </ligand>
</feature>
<feature type="binding site" evidence="1">
    <location>
        <position position="179"/>
    </location>
    <ligand>
        <name>Zn(2+)</name>
        <dbReference type="ChEBI" id="CHEBI:29105"/>
        <label>2</label>
    </ligand>
</feature>
<feature type="binding site" evidence="1">
    <location>
        <position position="182"/>
    </location>
    <ligand>
        <name>Zn(2+)</name>
        <dbReference type="ChEBI" id="CHEBI:29105"/>
        <label>3</label>
    </ligand>
</feature>
<feature type="binding site" evidence="1">
    <location>
        <position position="216"/>
    </location>
    <ligand>
        <name>Zn(2+)</name>
        <dbReference type="ChEBI" id="CHEBI:29105"/>
        <label>2</label>
    </ligand>
</feature>
<feature type="binding site" evidence="1">
    <location>
        <position position="229"/>
    </location>
    <ligand>
        <name>Zn(2+)</name>
        <dbReference type="ChEBI" id="CHEBI:29105"/>
        <label>3</label>
    </ligand>
</feature>
<feature type="binding site" evidence="1">
    <location>
        <position position="231"/>
    </location>
    <ligand>
        <name>Zn(2+)</name>
        <dbReference type="ChEBI" id="CHEBI:29105"/>
        <label>3</label>
    </ligand>
</feature>
<feature type="binding site" evidence="1">
    <location>
        <position position="261"/>
    </location>
    <ligand>
        <name>Zn(2+)</name>
        <dbReference type="ChEBI" id="CHEBI:29105"/>
        <label>2</label>
    </ligand>
</feature>
<evidence type="ECO:0000255" key="1">
    <source>
        <dbReference type="HAMAP-Rule" id="MF_00152"/>
    </source>
</evidence>
<organism>
    <name type="scientific">Citrobacter koseri (strain ATCC BAA-895 / CDC 4225-83 / SGSC4696)</name>
    <dbReference type="NCBI Taxonomy" id="290338"/>
    <lineage>
        <taxon>Bacteria</taxon>
        <taxon>Pseudomonadati</taxon>
        <taxon>Pseudomonadota</taxon>
        <taxon>Gammaproteobacteria</taxon>
        <taxon>Enterobacterales</taxon>
        <taxon>Enterobacteriaceae</taxon>
        <taxon>Citrobacter</taxon>
    </lineage>
</organism>
<gene>
    <name evidence="1" type="primary">nfo</name>
    <name type="ordered locus">CKO_00625</name>
</gene>
<reference key="1">
    <citation type="submission" date="2007-08" db="EMBL/GenBank/DDBJ databases">
        <authorList>
            <consortium name="The Citrobacter koseri Genome Sequencing Project"/>
            <person name="McClelland M."/>
            <person name="Sanderson E.K."/>
            <person name="Porwollik S."/>
            <person name="Spieth J."/>
            <person name="Clifton W.S."/>
            <person name="Latreille P."/>
            <person name="Courtney L."/>
            <person name="Wang C."/>
            <person name="Pepin K."/>
            <person name="Bhonagiri V."/>
            <person name="Nash W."/>
            <person name="Johnson M."/>
            <person name="Thiruvilangam P."/>
            <person name="Wilson R."/>
        </authorList>
    </citation>
    <scope>NUCLEOTIDE SEQUENCE [LARGE SCALE GENOMIC DNA]</scope>
    <source>
        <strain>ATCC BAA-895 / CDC 4225-83 / SGSC4696</strain>
    </source>
</reference>
<keyword id="KW-0227">DNA damage</keyword>
<keyword id="KW-0234">DNA repair</keyword>
<keyword id="KW-0255">Endonuclease</keyword>
<keyword id="KW-0378">Hydrolase</keyword>
<keyword id="KW-0479">Metal-binding</keyword>
<keyword id="KW-0540">Nuclease</keyword>
<keyword id="KW-1185">Reference proteome</keyword>
<keyword id="KW-0862">Zinc</keyword>
<sequence>MKYIGAHVSAAGGLANAAIRAAEIDATAFALFTKNQRQWRAAPLTAQIIDDFKAACEKYHYSPAQILPHDSYLINLGHPVSEALEKSRDAFIDEMQRCEQLGLSLLNFHPGSHLQQIPEEECLARIAESINIALEKTQGVTAVIENTAGQGSNLGFRFEHLAAIIDGVDDKSRVGVCIDTCHAFAAGYDLRTTDECEKTFADFERVVGFTYLRGMHLNDAKSAFGSRVDRHHSLGEGNIGHDAFRWIMQDDRFDGIPLILETINPDIWAEEIAWLKAQQTAKVVA</sequence>
<accession>A8AE66</accession>
<name>END4_CITK8</name>
<proteinExistence type="inferred from homology"/>
<protein>
    <recommendedName>
        <fullName evidence="1">Probable endonuclease 4</fullName>
        <ecNumber evidence="1">3.1.21.2</ecNumber>
    </recommendedName>
    <alternativeName>
        <fullName evidence="1">Endodeoxyribonuclease IV</fullName>
    </alternativeName>
    <alternativeName>
        <fullName evidence="1">Endonuclease IV</fullName>
    </alternativeName>
</protein>
<comment type="function">
    <text evidence="1">Endonuclease IV plays a role in DNA repair. It cleaves phosphodiester bonds at apurinic or apyrimidinic (AP) sites, generating a 3'-hydroxyl group and a 5'-terminal sugar phosphate.</text>
</comment>
<comment type="catalytic activity">
    <reaction evidence="1">
        <text>Endonucleolytic cleavage to 5'-phosphooligonucleotide end-products.</text>
        <dbReference type="EC" id="3.1.21.2"/>
    </reaction>
</comment>
<comment type="cofactor">
    <cofactor evidence="1">
        <name>Zn(2+)</name>
        <dbReference type="ChEBI" id="CHEBI:29105"/>
    </cofactor>
    <text evidence="1">Binds 3 Zn(2+) ions.</text>
</comment>
<comment type="similarity">
    <text evidence="1">Belongs to the AP endonuclease 2 family.</text>
</comment>
<dbReference type="EC" id="3.1.21.2" evidence="1"/>
<dbReference type="EMBL" id="CP000822">
    <property type="protein sequence ID" value="ABV11779.1"/>
    <property type="molecule type" value="Genomic_DNA"/>
</dbReference>
<dbReference type="RefSeq" id="WP_012131603.1">
    <property type="nucleotide sequence ID" value="NC_009792.1"/>
</dbReference>
<dbReference type="SMR" id="A8AE66"/>
<dbReference type="STRING" id="290338.CKO_00625"/>
<dbReference type="GeneID" id="45134848"/>
<dbReference type="KEGG" id="cko:CKO_00625"/>
<dbReference type="HOGENOM" id="CLU_025885_0_4_6"/>
<dbReference type="OrthoDB" id="9805666at2"/>
<dbReference type="Proteomes" id="UP000008148">
    <property type="component" value="Chromosome"/>
</dbReference>
<dbReference type="GO" id="GO:0008833">
    <property type="term" value="F:deoxyribonuclease IV (phage-T4-induced) activity"/>
    <property type="evidence" value="ECO:0007669"/>
    <property type="project" value="UniProtKB-UniRule"/>
</dbReference>
<dbReference type="GO" id="GO:0003677">
    <property type="term" value="F:DNA binding"/>
    <property type="evidence" value="ECO:0007669"/>
    <property type="project" value="InterPro"/>
</dbReference>
<dbReference type="GO" id="GO:0003906">
    <property type="term" value="F:DNA-(apurinic or apyrimidinic site) endonuclease activity"/>
    <property type="evidence" value="ECO:0007669"/>
    <property type="project" value="TreeGrafter"/>
</dbReference>
<dbReference type="GO" id="GO:0008081">
    <property type="term" value="F:phosphoric diester hydrolase activity"/>
    <property type="evidence" value="ECO:0007669"/>
    <property type="project" value="TreeGrafter"/>
</dbReference>
<dbReference type="GO" id="GO:0008270">
    <property type="term" value="F:zinc ion binding"/>
    <property type="evidence" value="ECO:0007669"/>
    <property type="project" value="UniProtKB-UniRule"/>
</dbReference>
<dbReference type="GO" id="GO:0006284">
    <property type="term" value="P:base-excision repair"/>
    <property type="evidence" value="ECO:0007669"/>
    <property type="project" value="TreeGrafter"/>
</dbReference>
<dbReference type="CDD" id="cd00019">
    <property type="entry name" value="AP2Ec"/>
    <property type="match status" value="1"/>
</dbReference>
<dbReference type="FunFam" id="3.20.20.150:FF:000001">
    <property type="entry name" value="Probable endonuclease 4"/>
    <property type="match status" value="1"/>
</dbReference>
<dbReference type="Gene3D" id="3.20.20.150">
    <property type="entry name" value="Divalent-metal-dependent TIM barrel enzymes"/>
    <property type="match status" value="1"/>
</dbReference>
<dbReference type="HAMAP" id="MF_00152">
    <property type="entry name" value="Nfo"/>
    <property type="match status" value="1"/>
</dbReference>
<dbReference type="InterPro" id="IPR001719">
    <property type="entry name" value="AP_endonuc_2"/>
</dbReference>
<dbReference type="InterPro" id="IPR018246">
    <property type="entry name" value="AP_endonuc_F2_Zn_BS"/>
</dbReference>
<dbReference type="InterPro" id="IPR036237">
    <property type="entry name" value="Xyl_isomerase-like_sf"/>
</dbReference>
<dbReference type="InterPro" id="IPR013022">
    <property type="entry name" value="Xyl_isomerase-like_TIM-brl"/>
</dbReference>
<dbReference type="NCBIfam" id="TIGR00587">
    <property type="entry name" value="nfo"/>
    <property type="match status" value="1"/>
</dbReference>
<dbReference type="NCBIfam" id="NF002199">
    <property type="entry name" value="PRK01060.1-4"/>
    <property type="match status" value="1"/>
</dbReference>
<dbReference type="PANTHER" id="PTHR21445:SF0">
    <property type="entry name" value="APURINIC-APYRIMIDINIC ENDONUCLEASE"/>
    <property type="match status" value="1"/>
</dbReference>
<dbReference type="PANTHER" id="PTHR21445">
    <property type="entry name" value="ENDONUCLEASE IV ENDODEOXYRIBONUCLEASE IV"/>
    <property type="match status" value="1"/>
</dbReference>
<dbReference type="Pfam" id="PF01261">
    <property type="entry name" value="AP_endonuc_2"/>
    <property type="match status" value="1"/>
</dbReference>
<dbReference type="SMART" id="SM00518">
    <property type="entry name" value="AP2Ec"/>
    <property type="match status" value="1"/>
</dbReference>
<dbReference type="SUPFAM" id="SSF51658">
    <property type="entry name" value="Xylose isomerase-like"/>
    <property type="match status" value="1"/>
</dbReference>
<dbReference type="PROSITE" id="PS00729">
    <property type="entry name" value="AP_NUCLEASE_F2_1"/>
    <property type="match status" value="1"/>
</dbReference>
<dbReference type="PROSITE" id="PS00730">
    <property type="entry name" value="AP_NUCLEASE_F2_2"/>
    <property type="match status" value="1"/>
</dbReference>
<dbReference type="PROSITE" id="PS00731">
    <property type="entry name" value="AP_NUCLEASE_F2_3"/>
    <property type="match status" value="1"/>
</dbReference>
<dbReference type="PROSITE" id="PS51432">
    <property type="entry name" value="AP_NUCLEASE_F2_4"/>
    <property type="match status" value="1"/>
</dbReference>